<reference key="1">
    <citation type="submission" date="2007-03" db="EMBL/GenBank/DDBJ databases">
        <authorList>
            <consortium name="NIH - Xenopus Gene Collection (XGC) project"/>
        </authorList>
    </citation>
    <scope>NUCLEOTIDE SEQUENCE [LARGE SCALE MRNA]</scope>
    <source>
        <tissue>Gastrula</tissue>
    </source>
</reference>
<gene>
    <name type="primary">odr4</name>
</gene>
<accession>A3KNB6</accession>
<evidence type="ECO:0000250" key="1">
    <source>
        <dbReference type="UniProtKB" id="Q8I7F8"/>
    </source>
</evidence>
<evidence type="ECO:0000255" key="2"/>
<evidence type="ECO:0000256" key="3">
    <source>
        <dbReference type="SAM" id="MobiDB-lite"/>
    </source>
</evidence>
<evidence type="ECO:0000305" key="4"/>
<feature type="chain" id="PRO_0000304687" description="Protein odr-4 homolog">
    <location>
        <begin position="1"/>
        <end position="446"/>
    </location>
</feature>
<feature type="transmembrane region" description="Helical" evidence="2">
    <location>
        <begin position="76"/>
        <end position="96"/>
    </location>
</feature>
<feature type="transmembrane region" description="Helical" evidence="2">
    <location>
        <begin position="426"/>
        <end position="446"/>
    </location>
</feature>
<feature type="region of interest" description="Disordered" evidence="3">
    <location>
        <begin position="394"/>
        <end position="417"/>
    </location>
</feature>
<feature type="compositionally biased region" description="Basic and acidic residues" evidence="3">
    <location>
        <begin position="394"/>
        <end position="415"/>
    </location>
</feature>
<organism>
    <name type="scientific">Xenopus laevis</name>
    <name type="common">African clawed frog</name>
    <dbReference type="NCBI Taxonomy" id="8355"/>
    <lineage>
        <taxon>Eukaryota</taxon>
        <taxon>Metazoa</taxon>
        <taxon>Chordata</taxon>
        <taxon>Craniata</taxon>
        <taxon>Vertebrata</taxon>
        <taxon>Euteleostomi</taxon>
        <taxon>Amphibia</taxon>
        <taxon>Batrachia</taxon>
        <taxon>Anura</taxon>
        <taxon>Pipoidea</taxon>
        <taxon>Pipidae</taxon>
        <taxon>Xenopodinae</taxon>
        <taxon>Xenopus</taxon>
        <taxon>Xenopus</taxon>
    </lineage>
</organism>
<sequence>MGRSYYVDDRVEKYFSKLVQQQKACITGLIIGQYSSQRDYAVLTAQTPQKEDQNEEKKPGLSKLEEIDDEWVSMHASQVGRMLPGGLMVLGVFLMTTPDLSKDAQTILRKLVFAVEKSSMKNRLWNFDEDDVSERVTLHICSSTKKITCRTYDINDPKSTPKPADWKYQNSVLSWLTVDCNVRVDVTIPLTSPSLTYQERQKSIRLGLVKWTKEIEDSVVLFNGQYKDKNGDLFEEQKKSSRSSSHYSPQIITANFLNASPLIDNTRSTALVQPCKSSLTIQGVMKCRGFIHSNRPKVKDAMQAIKRDLLNTIQDRCELLFEDMMLNGPSNENDACPLPQRVFVPINGSNLKLCDYLFGDETTSDLQSHFLEIMDQEVEQNELDFTEKKCELAHPEKRESEPASQHLESKPENKARSSSTSLLNKGLVISTIVASIAIIISFYYIM</sequence>
<protein>
    <recommendedName>
        <fullName>Protein odr-4 homolog</fullName>
    </recommendedName>
</protein>
<keyword id="KW-0472">Membrane</keyword>
<keyword id="KW-1185">Reference proteome</keyword>
<keyword id="KW-0812">Transmembrane</keyword>
<keyword id="KW-1133">Transmembrane helix</keyword>
<proteinExistence type="evidence at transcript level"/>
<name>ODR4_XENLA</name>
<dbReference type="EMBL" id="BC133748">
    <property type="protein sequence ID" value="AAI33749.1"/>
    <property type="molecule type" value="mRNA"/>
</dbReference>
<dbReference type="RefSeq" id="NP_001090192.1">
    <property type="nucleotide sequence ID" value="NM_001096723.1"/>
</dbReference>
<dbReference type="RefSeq" id="XP_018112460.1">
    <property type="nucleotide sequence ID" value="XM_018256971.1"/>
</dbReference>
<dbReference type="DNASU" id="779082"/>
<dbReference type="GeneID" id="779082"/>
<dbReference type="KEGG" id="xla:779082"/>
<dbReference type="AGR" id="Xenbase:XB-GENE-964883"/>
<dbReference type="CTD" id="779082"/>
<dbReference type="Xenbase" id="XB-GENE-964883">
    <property type="gene designation" value="odr4.L"/>
</dbReference>
<dbReference type="OMA" id="FNEPPRR"/>
<dbReference type="OrthoDB" id="21458at2759"/>
<dbReference type="Proteomes" id="UP000186698">
    <property type="component" value="Chromosome 4L"/>
</dbReference>
<dbReference type="Bgee" id="779082">
    <property type="expression patterns" value="Expressed in spleen and 19 other cell types or tissues"/>
</dbReference>
<dbReference type="GO" id="GO:0012505">
    <property type="term" value="C:endomembrane system"/>
    <property type="evidence" value="ECO:0007669"/>
    <property type="project" value="TreeGrafter"/>
</dbReference>
<dbReference type="GO" id="GO:0016020">
    <property type="term" value="C:membrane"/>
    <property type="evidence" value="ECO:0007669"/>
    <property type="project" value="UniProtKB-SubCell"/>
</dbReference>
<dbReference type="GO" id="GO:0008104">
    <property type="term" value="P:protein localization"/>
    <property type="evidence" value="ECO:0000318"/>
    <property type="project" value="GO_Central"/>
</dbReference>
<dbReference type="InterPro" id="IPR029454">
    <property type="entry name" value="ODR-4-like"/>
</dbReference>
<dbReference type="PANTHER" id="PTHR33966">
    <property type="entry name" value="PROTEIN ODR-4 HOMOLOG"/>
    <property type="match status" value="1"/>
</dbReference>
<dbReference type="PANTHER" id="PTHR33966:SF1">
    <property type="entry name" value="PROTEIN ODR-4 HOMOLOG"/>
    <property type="match status" value="1"/>
</dbReference>
<dbReference type="Pfam" id="PF14778">
    <property type="entry name" value="ODR4-like"/>
    <property type="match status" value="1"/>
</dbReference>
<comment type="function">
    <text evidence="1">May play a role in the trafficking of a subset of G-protein coupled receptors.</text>
</comment>
<comment type="subcellular location">
    <subcellularLocation>
        <location evidence="2">Membrane</location>
        <topology evidence="2">Multi-pass membrane protein</topology>
    </subcellularLocation>
</comment>
<comment type="similarity">
    <text evidence="4">Belongs to the ODR-4 family.</text>
</comment>